<gene>
    <name evidence="1" type="primary">gatD</name>
    <name type="ordered locus">YN1551_1574</name>
</gene>
<sequence length="445" mass="49813">MQENYKAKAYDILKNLNIEEGDLIEIKKGDLRIRGILLPSYSKDERIFVIKLDNGYNIGISIDNISEIKLITKNSSKAQESERKEVSRNGAKSEIKIISTGGTIVSKVEYETGAVRPALTTEEIVQFLPEINEIAKVDAEVLFSILSENMKPEYWVKIAESVKKAFDEGNTGVVIAHGTDTMAYTASALAFSLRSLQGPVVLVGSQRSSDRPSSDSAINLLSAVTTAKYAPFGEVVVNMHADSSDTYALVHRGVKVRKMHSSRRDAFQSVNDKPLAKVLWKERKLVMLDKSYMSKKGETTLDAKFDNRAFLLYYYPGLDRDFLEHILTNTKIRGLIIAGTGLGHTSSDYVELFRKATKDGIFIGMTTQCLFGRVNMNVYTTGRQLLDAGVTPLEDMLPEVALVKLMWVLAHEQDLEKIRSLMISNLVGEINPRHTLDLFPRWSYE</sequence>
<reference key="1">
    <citation type="journal article" date="2009" name="Proc. Natl. Acad. Sci. U.S.A.">
        <title>Biogeography of the Sulfolobus islandicus pan-genome.</title>
        <authorList>
            <person name="Reno M.L."/>
            <person name="Held N.L."/>
            <person name="Fields C.J."/>
            <person name="Burke P.V."/>
            <person name="Whitaker R.J."/>
        </authorList>
    </citation>
    <scope>NUCLEOTIDE SEQUENCE [LARGE SCALE GENOMIC DNA]</scope>
    <source>
        <strain>Y.N.15.51 / Yellowstone #2</strain>
    </source>
</reference>
<proteinExistence type="inferred from homology"/>
<protein>
    <recommendedName>
        <fullName evidence="1">Glutamyl-tRNA(Gln) amidotransferase subunit D</fullName>
        <shortName evidence="1">Glu-ADT subunit D</shortName>
        <ecNumber evidence="1">6.3.5.-</ecNumber>
    </recommendedName>
</protein>
<organism>
    <name type="scientific">Saccharolobus islandicus (strain Y.N.15.51 / Yellowstone #2)</name>
    <name type="common">Sulfolobus islandicus</name>
    <dbReference type="NCBI Taxonomy" id="419942"/>
    <lineage>
        <taxon>Archaea</taxon>
        <taxon>Thermoproteota</taxon>
        <taxon>Thermoprotei</taxon>
        <taxon>Sulfolobales</taxon>
        <taxon>Sulfolobaceae</taxon>
        <taxon>Saccharolobus</taxon>
    </lineage>
</organism>
<accession>C3NHQ2</accession>
<dbReference type="EC" id="6.3.5.-" evidence="1"/>
<dbReference type="EMBL" id="CP001404">
    <property type="protein sequence ID" value="ACP48662.1"/>
    <property type="molecule type" value="Genomic_DNA"/>
</dbReference>
<dbReference type="RefSeq" id="WP_012711295.1">
    <property type="nucleotide sequence ID" value="NC_012623.1"/>
</dbReference>
<dbReference type="SMR" id="C3NHQ2"/>
<dbReference type="GeneID" id="84061603"/>
<dbReference type="KEGG" id="sin:YN1551_1574"/>
<dbReference type="HOGENOM" id="CLU_019134_2_1_2"/>
<dbReference type="Proteomes" id="UP000006818">
    <property type="component" value="Chromosome"/>
</dbReference>
<dbReference type="GO" id="GO:0004067">
    <property type="term" value="F:asparaginase activity"/>
    <property type="evidence" value="ECO:0007669"/>
    <property type="project" value="InterPro"/>
</dbReference>
<dbReference type="GO" id="GO:0005524">
    <property type="term" value="F:ATP binding"/>
    <property type="evidence" value="ECO:0007669"/>
    <property type="project" value="UniProtKB-KW"/>
</dbReference>
<dbReference type="GO" id="GO:0050567">
    <property type="term" value="F:glutaminyl-tRNA synthase (glutamine-hydrolyzing) activity"/>
    <property type="evidence" value="ECO:0007669"/>
    <property type="project" value="UniProtKB-UniRule"/>
</dbReference>
<dbReference type="GO" id="GO:0006520">
    <property type="term" value="P:amino acid metabolic process"/>
    <property type="evidence" value="ECO:0007669"/>
    <property type="project" value="InterPro"/>
</dbReference>
<dbReference type="GO" id="GO:0006450">
    <property type="term" value="P:regulation of translational fidelity"/>
    <property type="evidence" value="ECO:0007669"/>
    <property type="project" value="InterPro"/>
</dbReference>
<dbReference type="GO" id="GO:0006412">
    <property type="term" value="P:translation"/>
    <property type="evidence" value="ECO:0007669"/>
    <property type="project" value="UniProtKB-UniRule"/>
</dbReference>
<dbReference type="CDD" id="cd08962">
    <property type="entry name" value="GatD"/>
    <property type="match status" value="1"/>
</dbReference>
<dbReference type="Gene3D" id="2.30.30.520">
    <property type="match status" value="1"/>
</dbReference>
<dbReference type="Gene3D" id="3.40.50.40">
    <property type="match status" value="1"/>
</dbReference>
<dbReference type="Gene3D" id="3.40.50.1170">
    <property type="entry name" value="L-asparaginase, N-terminal domain"/>
    <property type="match status" value="1"/>
</dbReference>
<dbReference type="HAMAP" id="MF_00586">
    <property type="entry name" value="GatD"/>
    <property type="match status" value="1"/>
</dbReference>
<dbReference type="InterPro" id="IPR006033">
    <property type="entry name" value="AsnA_fam"/>
</dbReference>
<dbReference type="InterPro" id="IPR036152">
    <property type="entry name" value="Asp/glu_Ase-like_sf"/>
</dbReference>
<dbReference type="InterPro" id="IPR006034">
    <property type="entry name" value="Asparaginase/glutaminase-like"/>
</dbReference>
<dbReference type="InterPro" id="IPR027475">
    <property type="entry name" value="Asparaginase/glutaminase_AS2"/>
</dbReference>
<dbReference type="InterPro" id="IPR040919">
    <property type="entry name" value="Asparaginase_C"/>
</dbReference>
<dbReference type="InterPro" id="IPR011878">
    <property type="entry name" value="GatD"/>
</dbReference>
<dbReference type="InterPro" id="IPR040918">
    <property type="entry name" value="GatD_N"/>
</dbReference>
<dbReference type="InterPro" id="IPR037222">
    <property type="entry name" value="GatD_N_sf"/>
</dbReference>
<dbReference type="InterPro" id="IPR027473">
    <property type="entry name" value="L-asparaginase_C"/>
</dbReference>
<dbReference type="InterPro" id="IPR027474">
    <property type="entry name" value="L-asparaginase_N"/>
</dbReference>
<dbReference type="InterPro" id="IPR037152">
    <property type="entry name" value="L-asparaginase_N_sf"/>
</dbReference>
<dbReference type="NCBIfam" id="TIGR00519">
    <property type="entry name" value="asnASE_I"/>
    <property type="match status" value="1"/>
</dbReference>
<dbReference type="NCBIfam" id="TIGR02153">
    <property type="entry name" value="gatD_arch"/>
    <property type="match status" value="1"/>
</dbReference>
<dbReference type="NCBIfam" id="NF003217">
    <property type="entry name" value="PRK04183.1"/>
    <property type="match status" value="1"/>
</dbReference>
<dbReference type="PANTHER" id="PTHR11707:SF28">
    <property type="entry name" value="60 KDA LYSOPHOSPHOLIPASE"/>
    <property type="match status" value="1"/>
</dbReference>
<dbReference type="PANTHER" id="PTHR11707">
    <property type="entry name" value="L-ASPARAGINASE"/>
    <property type="match status" value="1"/>
</dbReference>
<dbReference type="Pfam" id="PF00710">
    <property type="entry name" value="Asparaginase"/>
    <property type="match status" value="1"/>
</dbReference>
<dbReference type="Pfam" id="PF17763">
    <property type="entry name" value="Asparaginase_C"/>
    <property type="match status" value="1"/>
</dbReference>
<dbReference type="Pfam" id="PF18195">
    <property type="entry name" value="GatD_N"/>
    <property type="match status" value="1"/>
</dbReference>
<dbReference type="PIRSF" id="PIRSF500175">
    <property type="entry name" value="Glu_ADT_D"/>
    <property type="match status" value="1"/>
</dbReference>
<dbReference type="PIRSF" id="PIRSF001220">
    <property type="entry name" value="L-ASNase_gatD"/>
    <property type="match status" value="1"/>
</dbReference>
<dbReference type="PRINTS" id="PR00139">
    <property type="entry name" value="ASNGLNASE"/>
</dbReference>
<dbReference type="SMART" id="SM00870">
    <property type="entry name" value="Asparaginase"/>
    <property type="match status" value="1"/>
</dbReference>
<dbReference type="SUPFAM" id="SSF141300">
    <property type="entry name" value="GatD N-terminal domain-like"/>
    <property type="match status" value="1"/>
</dbReference>
<dbReference type="SUPFAM" id="SSF53774">
    <property type="entry name" value="Glutaminase/Asparaginase"/>
    <property type="match status" value="1"/>
</dbReference>
<dbReference type="PROSITE" id="PS00917">
    <property type="entry name" value="ASN_GLN_ASE_2"/>
    <property type="match status" value="1"/>
</dbReference>
<dbReference type="PROSITE" id="PS51732">
    <property type="entry name" value="ASN_GLN_ASE_3"/>
    <property type="match status" value="1"/>
</dbReference>
<feature type="chain" id="PRO_1000212153" description="Glutamyl-tRNA(Gln) amidotransferase subunit D">
    <location>
        <begin position="1"/>
        <end position="445"/>
    </location>
</feature>
<feature type="domain" description="Asparaginase/glutaminase" evidence="2">
    <location>
        <begin position="93"/>
        <end position="425"/>
    </location>
</feature>
<feature type="active site" evidence="1">
    <location>
        <position position="103"/>
    </location>
</feature>
<feature type="active site" evidence="1">
    <location>
        <position position="179"/>
    </location>
</feature>
<feature type="active site" evidence="1">
    <location>
        <position position="180"/>
    </location>
</feature>
<feature type="active site" evidence="1">
    <location>
        <position position="258"/>
    </location>
</feature>
<keyword id="KW-0067">ATP-binding</keyword>
<keyword id="KW-0436">Ligase</keyword>
<keyword id="KW-0547">Nucleotide-binding</keyword>
<keyword id="KW-0648">Protein biosynthesis</keyword>
<comment type="function">
    <text evidence="1">Allows the formation of correctly charged Gln-tRNA(Gln) through the transamidation of misacylated Glu-tRNA(Gln) in organisms which lack glutaminyl-tRNA synthetase. The reaction takes place in the presence of glutamine and ATP through an activated gamma-phospho-Glu-tRNA(Gln). The GatDE system is specific for glutamate and does not act on aspartate.</text>
</comment>
<comment type="catalytic activity">
    <reaction evidence="1">
        <text>L-glutamyl-tRNA(Gln) + L-glutamine + ATP + H2O = L-glutaminyl-tRNA(Gln) + L-glutamate + ADP + phosphate + H(+)</text>
        <dbReference type="Rhea" id="RHEA:17521"/>
        <dbReference type="Rhea" id="RHEA-COMP:9681"/>
        <dbReference type="Rhea" id="RHEA-COMP:9684"/>
        <dbReference type="ChEBI" id="CHEBI:15377"/>
        <dbReference type="ChEBI" id="CHEBI:15378"/>
        <dbReference type="ChEBI" id="CHEBI:29985"/>
        <dbReference type="ChEBI" id="CHEBI:30616"/>
        <dbReference type="ChEBI" id="CHEBI:43474"/>
        <dbReference type="ChEBI" id="CHEBI:58359"/>
        <dbReference type="ChEBI" id="CHEBI:78520"/>
        <dbReference type="ChEBI" id="CHEBI:78521"/>
        <dbReference type="ChEBI" id="CHEBI:456216"/>
    </reaction>
</comment>
<comment type="subunit">
    <text evidence="1">Heterodimer of GatD and GatE.</text>
</comment>
<comment type="similarity">
    <text evidence="1">Belongs to the asparaginase 1 family. GatD subfamily.</text>
</comment>
<name>GATD_SACI1</name>
<evidence type="ECO:0000255" key="1">
    <source>
        <dbReference type="HAMAP-Rule" id="MF_00586"/>
    </source>
</evidence>
<evidence type="ECO:0000255" key="2">
    <source>
        <dbReference type="PROSITE-ProRule" id="PRU01068"/>
    </source>
</evidence>